<proteinExistence type="inferred from homology"/>
<gene>
    <name evidence="1" type="primary">hldE</name>
    <name type="ordered locus">EFER_2996</name>
</gene>
<protein>
    <recommendedName>
        <fullName evidence="1">Bifunctional protein HldE</fullName>
    </recommendedName>
    <domain>
        <recommendedName>
            <fullName evidence="1">D-beta-D-heptose 7-phosphate kinase</fullName>
            <ecNumber evidence="1">2.7.1.167</ecNumber>
        </recommendedName>
        <alternativeName>
            <fullName evidence="1">D-beta-D-heptose 7-phosphotransferase</fullName>
        </alternativeName>
        <alternativeName>
            <fullName evidence="1">D-glycero-beta-D-manno-heptose-7-phosphate kinase</fullName>
        </alternativeName>
    </domain>
    <domain>
        <recommendedName>
            <fullName evidence="1">D-beta-D-heptose 1-phosphate adenylyltransferase</fullName>
            <ecNumber evidence="1">2.7.7.70</ecNumber>
        </recommendedName>
        <alternativeName>
            <fullName evidence="1">D-glycero-beta-D-manno-heptose 1-phosphate adenylyltransferase</fullName>
        </alternativeName>
    </domain>
</protein>
<sequence length="477" mass="51109">MKVTLPEFERAGVMVVGDVMLDRYWYGPTSRISPEAPVPVVKVNTIEERPGGAANVAMNIASLGANARLVGLTGIDDAARALSKSLADVNVKCDFVSVPTHPTITKLRVLSRNQQLIRLDFEEGFEGVDPQPLHERINQALSSIGALVLSDYAKGALASVQQMIQLARKAGVPVLIDPKGTDFERYRGATLLTPNLSEFEAVVGKCKTEEEIVERGMKLIADYELSALLVTRSEQGMSLLQPGKEPLHMPTQAQEVYDVTGAGDTVIGVLAATLAAGNSLEEACFFANAAAGVVVGKLGTSTVSPIELENAVRGRADTGFGVMTEEELKLAVAAARKRGEKVVMTNGVFDILHAGHVSYLANARKLGDRLIVAVNSDASTKRLKGDSRPVNPLEQRMIVLGALEAVDWVVSFEEDTPQRLIAGILPDLLVKGGDYKPEEIAGSKEVWANGGEVLVLNFEDGCSTTNIIKKIQQDKKG</sequence>
<reference key="1">
    <citation type="journal article" date="2009" name="PLoS Genet.">
        <title>Organised genome dynamics in the Escherichia coli species results in highly diverse adaptive paths.</title>
        <authorList>
            <person name="Touchon M."/>
            <person name="Hoede C."/>
            <person name="Tenaillon O."/>
            <person name="Barbe V."/>
            <person name="Baeriswyl S."/>
            <person name="Bidet P."/>
            <person name="Bingen E."/>
            <person name="Bonacorsi S."/>
            <person name="Bouchier C."/>
            <person name="Bouvet O."/>
            <person name="Calteau A."/>
            <person name="Chiapello H."/>
            <person name="Clermont O."/>
            <person name="Cruveiller S."/>
            <person name="Danchin A."/>
            <person name="Diard M."/>
            <person name="Dossat C."/>
            <person name="Karoui M.E."/>
            <person name="Frapy E."/>
            <person name="Garry L."/>
            <person name="Ghigo J.M."/>
            <person name="Gilles A.M."/>
            <person name="Johnson J."/>
            <person name="Le Bouguenec C."/>
            <person name="Lescat M."/>
            <person name="Mangenot S."/>
            <person name="Martinez-Jehanne V."/>
            <person name="Matic I."/>
            <person name="Nassif X."/>
            <person name="Oztas S."/>
            <person name="Petit M.A."/>
            <person name="Pichon C."/>
            <person name="Rouy Z."/>
            <person name="Ruf C.S."/>
            <person name="Schneider D."/>
            <person name="Tourret J."/>
            <person name="Vacherie B."/>
            <person name="Vallenet D."/>
            <person name="Medigue C."/>
            <person name="Rocha E.P.C."/>
            <person name="Denamur E."/>
        </authorList>
    </citation>
    <scope>NUCLEOTIDE SEQUENCE [LARGE SCALE GENOMIC DNA]</scope>
    <source>
        <strain>ATCC 35469 / DSM 13698 / BCRC 15582 / CCUG 18766 / IAM 14443 / JCM 21226 / LMG 7866 / NBRC 102419 / NCTC 12128 / CDC 0568-73</strain>
    </source>
</reference>
<accession>B7LQC9</accession>
<dbReference type="EC" id="2.7.1.167" evidence="1"/>
<dbReference type="EC" id="2.7.7.70" evidence="1"/>
<dbReference type="EMBL" id="CU928158">
    <property type="protein sequence ID" value="CAQ90489.1"/>
    <property type="molecule type" value="Genomic_DNA"/>
</dbReference>
<dbReference type="RefSeq" id="WP_000869186.1">
    <property type="nucleotide sequence ID" value="NC_011740.1"/>
</dbReference>
<dbReference type="SMR" id="B7LQC9"/>
<dbReference type="GeneID" id="75060383"/>
<dbReference type="KEGG" id="efe:EFER_2996"/>
<dbReference type="HOGENOM" id="CLU_021150_2_1_6"/>
<dbReference type="OrthoDB" id="9802794at2"/>
<dbReference type="UniPathway" id="UPA00356">
    <property type="reaction ID" value="UER00437"/>
</dbReference>
<dbReference type="UniPathway" id="UPA00356">
    <property type="reaction ID" value="UER00439"/>
</dbReference>
<dbReference type="Proteomes" id="UP000000745">
    <property type="component" value="Chromosome"/>
</dbReference>
<dbReference type="GO" id="GO:0005829">
    <property type="term" value="C:cytosol"/>
    <property type="evidence" value="ECO:0007669"/>
    <property type="project" value="TreeGrafter"/>
</dbReference>
<dbReference type="GO" id="GO:0005524">
    <property type="term" value="F:ATP binding"/>
    <property type="evidence" value="ECO:0007669"/>
    <property type="project" value="UniProtKB-UniRule"/>
</dbReference>
<dbReference type="GO" id="GO:0033785">
    <property type="term" value="F:heptose 7-phosphate kinase activity"/>
    <property type="evidence" value="ECO:0007669"/>
    <property type="project" value="UniProtKB-UniRule"/>
</dbReference>
<dbReference type="GO" id="GO:0033786">
    <property type="term" value="F:heptose-1-phosphate adenylyltransferase activity"/>
    <property type="evidence" value="ECO:0007669"/>
    <property type="project" value="UniProtKB-UniRule"/>
</dbReference>
<dbReference type="GO" id="GO:0016773">
    <property type="term" value="F:phosphotransferase activity, alcohol group as acceptor"/>
    <property type="evidence" value="ECO:0007669"/>
    <property type="project" value="InterPro"/>
</dbReference>
<dbReference type="GO" id="GO:0097171">
    <property type="term" value="P:ADP-L-glycero-beta-D-manno-heptose biosynthetic process"/>
    <property type="evidence" value="ECO:0007669"/>
    <property type="project" value="UniProtKB-UniPathway"/>
</dbReference>
<dbReference type="CDD" id="cd01172">
    <property type="entry name" value="RfaE_like"/>
    <property type="match status" value="1"/>
</dbReference>
<dbReference type="FunFam" id="3.40.1190.20:FF:000002">
    <property type="entry name" value="Bifunctional protein HldE"/>
    <property type="match status" value="1"/>
</dbReference>
<dbReference type="FunFam" id="3.40.50.620:FF:000028">
    <property type="entry name" value="Bifunctional protein HldE"/>
    <property type="match status" value="1"/>
</dbReference>
<dbReference type="Gene3D" id="3.40.1190.20">
    <property type="match status" value="1"/>
</dbReference>
<dbReference type="Gene3D" id="3.40.50.620">
    <property type="entry name" value="HUPs"/>
    <property type="match status" value="1"/>
</dbReference>
<dbReference type="HAMAP" id="MF_01603">
    <property type="entry name" value="HldE"/>
    <property type="match status" value="1"/>
</dbReference>
<dbReference type="InterPro" id="IPR023030">
    <property type="entry name" value="Bifunc_HldE"/>
</dbReference>
<dbReference type="InterPro" id="IPR002173">
    <property type="entry name" value="Carboh/pur_kinase_PfkB_CS"/>
</dbReference>
<dbReference type="InterPro" id="IPR004821">
    <property type="entry name" value="Cyt_trans-like"/>
</dbReference>
<dbReference type="InterPro" id="IPR011611">
    <property type="entry name" value="PfkB_dom"/>
</dbReference>
<dbReference type="InterPro" id="IPR011913">
    <property type="entry name" value="RfaE_dom_I"/>
</dbReference>
<dbReference type="InterPro" id="IPR011914">
    <property type="entry name" value="RfaE_dom_II"/>
</dbReference>
<dbReference type="InterPro" id="IPR029056">
    <property type="entry name" value="Ribokinase-like"/>
</dbReference>
<dbReference type="InterPro" id="IPR014729">
    <property type="entry name" value="Rossmann-like_a/b/a_fold"/>
</dbReference>
<dbReference type="NCBIfam" id="TIGR00125">
    <property type="entry name" value="cyt_tran_rel"/>
    <property type="match status" value="1"/>
</dbReference>
<dbReference type="NCBIfam" id="NF008454">
    <property type="entry name" value="PRK11316.1"/>
    <property type="match status" value="1"/>
</dbReference>
<dbReference type="NCBIfam" id="TIGR02198">
    <property type="entry name" value="rfaE_dom_I"/>
    <property type="match status" value="1"/>
</dbReference>
<dbReference type="NCBIfam" id="TIGR02199">
    <property type="entry name" value="rfaE_dom_II"/>
    <property type="match status" value="1"/>
</dbReference>
<dbReference type="PANTHER" id="PTHR46969">
    <property type="entry name" value="BIFUNCTIONAL PROTEIN HLDE"/>
    <property type="match status" value="1"/>
</dbReference>
<dbReference type="PANTHER" id="PTHR46969:SF1">
    <property type="entry name" value="BIFUNCTIONAL PROTEIN HLDE"/>
    <property type="match status" value="1"/>
</dbReference>
<dbReference type="Pfam" id="PF01467">
    <property type="entry name" value="CTP_transf_like"/>
    <property type="match status" value="1"/>
</dbReference>
<dbReference type="Pfam" id="PF00294">
    <property type="entry name" value="PfkB"/>
    <property type="match status" value="1"/>
</dbReference>
<dbReference type="SUPFAM" id="SSF52374">
    <property type="entry name" value="Nucleotidylyl transferase"/>
    <property type="match status" value="1"/>
</dbReference>
<dbReference type="SUPFAM" id="SSF53613">
    <property type="entry name" value="Ribokinase-like"/>
    <property type="match status" value="1"/>
</dbReference>
<dbReference type="PROSITE" id="PS00583">
    <property type="entry name" value="PFKB_KINASES_1"/>
    <property type="match status" value="1"/>
</dbReference>
<organism>
    <name type="scientific">Escherichia fergusonii (strain ATCC 35469 / DSM 13698 / CCUG 18766 / IAM 14443 / JCM 21226 / LMG 7866 / NBRC 102419 / NCTC 12128 / CDC 0568-73)</name>
    <dbReference type="NCBI Taxonomy" id="585054"/>
    <lineage>
        <taxon>Bacteria</taxon>
        <taxon>Pseudomonadati</taxon>
        <taxon>Pseudomonadota</taxon>
        <taxon>Gammaproteobacteria</taxon>
        <taxon>Enterobacterales</taxon>
        <taxon>Enterobacteriaceae</taxon>
        <taxon>Escherichia</taxon>
    </lineage>
</organism>
<evidence type="ECO:0000255" key="1">
    <source>
        <dbReference type="HAMAP-Rule" id="MF_01603"/>
    </source>
</evidence>
<keyword id="KW-0007">Acetylation</keyword>
<keyword id="KW-0067">ATP-binding</keyword>
<keyword id="KW-0119">Carbohydrate metabolism</keyword>
<keyword id="KW-0418">Kinase</keyword>
<keyword id="KW-0511">Multifunctional enzyme</keyword>
<keyword id="KW-0547">Nucleotide-binding</keyword>
<keyword id="KW-0548">Nucleotidyltransferase</keyword>
<keyword id="KW-0808">Transferase</keyword>
<comment type="function">
    <text evidence="1">Catalyzes the phosphorylation of D-glycero-D-manno-heptose 7-phosphate at the C-1 position to selectively form D-glycero-beta-D-manno-heptose-1,7-bisphosphate.</text>
</comment>
<comment type="function">
    <text evidence="1">Catalyzes the ADP transfer from ATP to D-glycero-beta-D-manno-heptose 1-phosphate, yielding ADP-D-glycero-beta-D-manno-heptose.</text>
</comment>
<comment type="catalytic activity">
    <reaction evidence="1">
        <text>D-glycero-beta-D-manno-heptose 7-phosphate + ATP = D-glycero-beta-D-manno-heptose 1,7-bisphosphate + ADP + H(+)</text>
        <dbReference type="Rhea" id="RHEA:27473"/>
        <dbReference type="ChEBI" id="CHEBI:15378"/>
        <dbReference type="ChEBI" id="CHEBI:30616"/>
        <dbReference type="ChEBI" id="CHEBI:60204"/>
        <dbReference type="ChEBI" id="CHEBI:60208"/>
        <dbReference type="ChEBI" id="CHEBI:456216"/>
        <dbReference type="EC" id="2.7.1.167"/>
    </reaction>
</comment>
<comment type="catalytic activity">
    <reaction evidence="1">
        <text>D-glycero-beta-D-manno-heptose 1-phosphate + ATP + H(+) = ADP-D-glycero-beta-D-manno-heptose + diphosphate</text>
        <dbReference type="Rhea" id="RHEA:27465"/>
        <dbReference type="ChEBI" id="CHEBI:15378"/>
        <dbReference type="ChEBI" id="CHEBI:30616"/>
        <dbReference type="ChEBI" id="CHEBI:33019"/>
        <dbReference type="ChEBI" id="CHEBI:59967"/>
        <dbReference type="ChEBI" id="CHEBI:61593"/>
        <dbReference type="EC" id="2.7.7.70"/>
    </reaction>
</comment>
<comment type="pathway">
    <text evidence="1">Nucleotide-sugar biosynthesis; ADP-L-glycero-beta-D-manno-heptose biosynthesis; ADP-L-glycero-beta-D-manno-heptose from D-glycero-beta-D-manno-heptose 7-phosphate: step 1/4.</text>
</comment>
<comment type="pathway">
    <text evidence="1">Nucleotide-sugar biosynthesis; ADP-L-glycero-beta-D-manno-heptose biosynthesis; ADP-L-glycero-beta-D-manno-heptose from D-glycero-beta-D-manno-heptose 7-phosphate: step 3/4.</text>
</comment>
<comment type="subunit">
    <text evidence="1">Homodimer.</text>
</comment>
<comment type="similarity">
    <text evidence="1">In the N-terminal section; belongs to the carbohydrate kinase PfkB family.</text>
</comment>
<comment type="similarity">
    <text evidence="1">In the C-terminal section; belongs to the cytidylyltransferase family.</text>
</comment>
<feature type="chain" id="PRO_1000185811" description="Bifunctional protein HldE">
    <location>
        <begin position="1"/>
        <end position="477"/>
    </location>
</feature>
<feature type="region of interest" description="Ribokinase">
    <location>
        <begin position="1"/>
        <end position="318"/>
    </location>
</feature>
<feature type="region of interest" description="Cytidylyltransferase">
    <location>
        <begin position="344"/>
        <end position="477"/>
    </location>
</feature>
<feature type="active site" evidence="1">
    <location>
        <position position="264"/>
    </location>
</feature>
<feature type="binding site" evidence="1">
    <location>
        <begin position="195"/>
        <end position="198"/>
    </location>
    <ligand>
        <name>ATP</name>
        <dbReference type="ChEBI" id="CHEBI:30616"/>
    </ligand>
</feature>
<feature type="modified residue" description="N6-acetyllysine" evidence="1">
    <location>
        <position position="179"/>
    </location>
</feature>
<name>HLDE_ESCF3</name>